<accession>B2TJ28</accession>
<protein>
    <recommendedName>
        <fullName evidence="1">Small ribosomal subunit protein bS16</fullName>
    </recommendedName>
    <alternativeName>
        <fullName evidence="2">30S ribosomal protein S16</fullName>
    </alternativeName>
</protein>
<sequence>MAVKIRLRRMGCKKAPFYRIVVADSRSPRDGRFIEEIGYYNPITEPAEVKINEEKASKWLQDGAQPTDVVKKLFTQAGLSK</sequence>
<keyword id="KW-0687">Ribonucleoprotein</keyword>
<keyword id="KW-0689">Ribosomal protein</keyword>
<comment type="similarity">
    <text evidence="1">Belongs to the bacterial ribosomal protein bS16 family.</text>
</comment>
<gene>
    <name evidence="1" type="primary">rpsP</name>
    <name type="ordered locus">CLL_A1246</name>
</gene>
<evidence type="ECO:0000255" key="1">
    <source>
        <dbReference type="HAMAP-Rule" id="MF_00385"/>
    </source>
</evidence>
<evidence type="ECO:0000305" key="2"/>
<reference key="1">
    <citation type="submission" date="2008-04" db="EMBL/GenBank/DDBJ databases">
        <title>Complete sequence of Clostridium botulinum strain Eklund.</title>
        <authorList>
            <person name="Brinkac L.M."/>
            <person name="Brown J.L."/>
            <person name="Bruce D."/>
            <person name="Detter C."/>
            <person name="Munk C."/>
            <person name="Smith L.A."/>
            <person name="Smith T.J."/>
            <person name="Sutton G."/>
            <person name="Brettin T.S."/>
        </authorList>
    </citation>
    <scope>NUCLEOTIDE SEQUENCE [LARGE SCALE GENOMIC DNA]</scope>
    <source>
        <strain>Eklund 17B / Type B</strain>
    </source>
</reference>
<organism>
    <name type="scientific">Clostridium botulinum (strain Eklund 17B / Type B)</name>
    <dbReference type="NCBI Taxonomy" id="935198"/>
    <lineage>
        <taxon>Bacteria</taxon>
        <taxon>Bacillati</taxon>
        <taxon>Bacillota</taxon>
        <taxon>Clostridia</taxon>
        <taxon>Eubacteriales</taxon>
        <taxon>Clostridiaceae</taxon>
        <taxon>Clostridium</taxon>
    </lineage>
</organism>
<feature type="chain" id="PRO_1000196369" description="Small ribosomal subunit protein bS16">
    <location>
        <begin position="1"/>
        <end position="81"/>
    </location>
</feature>
<dbReference type="EMBL" id="CP001056">
    <property type="protein sequence ID" value="ACD24449.1"/>
    <property type="molecule type" value="Genomic_DNA"/>
</dbReference>
<dbReference type="SMR" id="B2TJ28"/>
<dbReference type="KEGG" id="cbk:CLL_A1246"/>
<dbReference type="PATRIC" id="fig|935198.13.peg.1192"/>
<dbReference type="HOGENOM" id="CLU_100590_5_0_9"/>
<dbReference type="Proteomes" id="UP000001195">
    <property type="component" value="Chromosome"/>
</dbReference>
<dbReference type="GO" id="GO:0005737">
    <property type="term" value="C:cytoplasm"/>
    <property type="evidence" value="ECO:0007669"/>
    <property type="project" value="UniProtKB-ARBA"/>
</dbReference>
<dbReference type="GO" id="GO:0015935">
    <property type="term" value="C:small ribosomal subunit"/>
    <property type="evidence" value="ECO:0007669"/>
    <property type="project" value="TreeGrafter"/>
</dbReference>
<dbReference type="GO" id="GO:0003735">
    <property type="term" value="F:structural constituent of ribosome"/>
    <property type="evidence" value="ECO:0007669"/>
    <property type="project" value="InterPro"/>
</dbReference>
<dbReference type="GO" id="GO:0006412">
    <property type="term" value="P:translation"/>
    <property type="evidence" value="ECO:0007669"/>
    <property type="project" value="UniProtKB-UniRule"/>
</dbReference>
<dbReference type="FunFam" id="3.30.1320.10:FF:000002">
    <property type="entry name" value="30S ribosomal protein S16"/>
    <property type="match status" value="1"/>
</dbReference>
<dbReference type="Gene3D" id="3.30.1320.10">
    <property type="match status" value="1"/>
</dbReference>
<dbReference type="HAMAP" id="MF_00385">
    <property type="entry name" value="Ribosomal_bS16"/>
    <property type="match status" value="1"/>
</dbReference>
<dbReference type="InterPro" id="IPR000307">
    <property type="entry name" value="Ribosomal_bS16"/>
</dbReference>
<dbReference type="InterPro" id="IPR023803">
    <property type="entry name" value="Ribosomal_bS16_dom_sf"/>
</dbReference>
<dbReference type="NCBIfam" id="TIGR00002">
    <property type="entry name" value="S16"/>
    <property type="match status" value="1"/>
</dbReference>
<dbReference type="PANTHER" id="PTHR12919">
    <property type="entry name" value="30S RIBOSOMAL PROTEIN S16"/>
    <property type="match status" value="1"/>
</dbReference>
<dbReference type="PANTHER" id="PTHR12919:SF20">
    <property type="entry name" value="SMALL RIBOSOMAL SUBUNIT PROTEIN BS16M"/>
    <property type="match status" value="1"/>
</dbReference>
<dbReference type="Pfam" id="PF00886">
    <property type="entry name" value="Ribosomal_S16"/>
    <property type="match status" value="1"/>
</dbReference>
<dbReference type="SUPFAM" id="SSF54565">
    <property type="entry name" value="Ribosomal protein S16"/>
    <property type="match status" value="1"/>
</dbReference>
<name>RS16_CLOBB</name>
<proteinExistence type="inferred from homology"/>